<name>Y359_SHESR</name>
<gene>
    <name type="ordered locus">Shewmr7_0359</name>
</gene>
<protein>
    <recommendedName>
        <fullName>UPF0758 protein Shewmr7_0359</fullName>
    </recommendedName>
</protein>
<comment type="similarity">
    <text evidence="2">Belongs to the UPF0758 family.</text>
</comment>
<sequence>MAIKDWPEGEGPRDKLLVKGAAHLSDAELLAVLLRNGLSGLNAVDLARSLIHEFGGLRSLLCAPKHQVCRLPGVGPVKYAQLQAAAELARRVAQENLQRGQVLTNPDLTRDYLMRQLADRSYEVFAILLLDSQHRVIQFVELFRGTIDSASVYPREVVSLVLEKKAAAVIVCHNHPSGIAEPSQADRRITERLKNALATIDVSLLDHMVVGDREIVSFAERGWIN</sequence>
<feature type="chain" id="PRO_1000001697" description="UPF0758 protein Shewmr7_0359">
    <location>
        <begin position="1"/>
        <end position="225"/>
    </location>
</feature>
<feature type="domain" description="MPN" evidence="1">
    <location>
        <begin position="102"/>
        <end position="224"/>
    </location>
</feature>
<feature type="short sequence motif" description="JAMM motif" evidence="1">
    <location>
        <begin position="173"/>
        <end position="186"/>
    </location>
</feature>
<feature type="binding site" evidence="1">
    <location>
        <position position="173"/>
    </location>
    <ligand>
        <name>Zn(2+)</name>
        <dbReference type="ChEBI" id="CHEBI:29105"/>
        <note>catalytic</note>
    </ligand>
</feature>
<feature type="binding site" evidence="1">
    <location>
        <position position="175"/>
    </location>
    <ligand>
        <name>Zn(2+)</name>
        <dbReference type="ChEBI" id="CHEBI:29105"/>
        <note>catalytic</note>
    </ligand>
</feature>
<feature type="binding site" evidence="1">
    <location>
        <position position="186"/>
    </location>
    <ligand>
        <name>Zn(2+)</name>
        <dbReference type="ChEBI" id="CHEBI:29105"/>
        <note>catalytic</note>
    </ligand>
</feature>
<evidence type="ECO:0000255" key="1">
    <source>
        <dbReference type="PROSITE-ProRule" id="PRU01182"/>
    </source>
</evidence>
<evidence type="ECO:0000305" key="2"/>
<dbReference type="EMBL" id="CP000444">
    <property type="protein sequence ID" value="ABI41362.1"/>
    <property type="molecule type" value="Genomic_DNA"/>
</dbReference>
<dbReference type="SMR" id="Q0HZU3"/>
<dbReference type="KEGG" id="shm:Shewmr7_0359"/>
<dbReference type="HOGENOM" id="CLU_073529_0_1_6"/>
<dbReference type="GO" id="GO:0046872">
    <property type="term" value="F:metal ion binding"/>
    <property type="evidence" value="ECO:0007669"/>
    <property type="project" value="UniProtKB-KW"/>
</dbReference>
<dbReference type="GO" id="GO:0008237">
    <property type="term" value="F:metallopeptidase activity"/>
    <property type="evidence" value="ECO:0007669"/>
    <property type="project" value="UniProtKB-KW"/>
</dbReference>
<dbReference type="GO" id="GO:0006508">
    <property type="term" value="P:proteolysis"/>
    <property type="evidence" value="ECO:0007669"/>
    <property type="project" value="UniProtKB-KW"/>
</dbReference>
<dbReference type="CDD" id="cd08071">
    <property type="entry name" value="MPN_DUF2466"/>
    <property type="match status" value="1"/>
</dbReference>
<dbReference type="FunFam" id="3.40.140.10:FF:000032">
    <property type="entry name" value="DNA repair protein RadC"/>
    <property type="match status" value="1"/>
</dbReference>
<dbReference type="Gene3D" id="3.40.140.10">
    <property type="entry name" value="Cytidine Deaminase, domain 2"/>
    <property type="match status" value="1"/>
</dbReference>
<dbReference type="InterPro" id="IPR037518">
    <property type="entry name" value="MPN"/>
</dbReference>
<dbReference type="InterPro" id="IPR025657">
    <property type="entry name" value="RadC_JAB"/>
</dbReference>
<dbReference type="InterPro" id="IPR010994">
    <property type="entry name" value="RuvA_2-like"/>
</dbReference>
<dbReference type="InterPro" id="IPR001405">
    <property type="entry name" value="UPF0758"/>
</dbReference>
<dbReference type="InterPro" id="IPR020891">
    <property type="entry name" value="UPF0758_CS"/>
</dbReference>
<dbReference type="InterPro" id="IPR046778">
    <property type="entry name" value="UPF0758_N"/>
</dbReference>
<dbReference type="NCBIfam" id="NF000642">
    <property type="entry name" value="PRK00024.1"/>
    <property type="match status" value="1"/>
</dbReference>
<dbReference type="NCBIfam" id="TIGR00608">
    <property type="entry name" value="radc"/>
    <property type="match status" value="1"/>
</dbReference>
<dbReference type="PANTHER" id="PTHR30471">
    <property type="entry name" value="DNA REPAIR PROTEIN RADC"/>
    <property type="match status" value="1"/>
</dbReference>
<dbReference type="PANTHER" id="PTHR30471:SF3">
    <property type="entry name" value="UPF0758 PROTEIN YEES-RELATED"/>
    <property type="match status" value="1"/>
</dbReference>
<dbReference type="Pfam" id="PF04002">
    <property type="entry name" value="RadC"/>
    <property type="match status" value="1"/>
</dbReference>
<dbReference type="Pfam" id="PF20582">
    <property type="entry name" value="UPF0758_N"/>
    <property type="match status" value="1"/>
</dbReference>
<dbReference type="SUPFAM" id="SSF102712">
    <property type="entry name" value="JAB1/MPN domain"/>
    <property type="match status" value="1"/>
</dbReference>
<dbReference type="SUPFAM" id="SSF47781">
    <property type="entry name" value="RuvA domain 2-like"/>
    <property type="match status" value="1"/>
</dbReference>
<dbReference type="PROSITE" id="PS50249">
    <property type="entry name" value="MPN"/>
    <property type="match status" value="1"/>
</dbReference>
<dbReference type="PROSITE" id="PS01302">
    <property type="entry name" value="UPF0758"/>
    <property type="match status" value="1"/>
</dbReference>
<accession>Q0HZU3</accession>
<organism>
    <name type="scientific">Shewanella sp. (strain MR-7)</name>
    <dbReference type="NCBI Taxonomy" id="60481"/>
    <lineage>
        <taxon>Bacteria</taxon>
        <taxon>Pseudomonadati</taxon>
        <taxon>Pseudomonadota</taxon>
        <taxon>Gammaproteobacteria</taxon>
        <taxon>Alteromonadales</taxon>
        <taxon>Shewanellaceae</taxon>
        <taxon>Shewanella</taxon>
    </lineage>
</organism>
<keyword id="KW-0378">Hydrolase</keyword>
<keyword id="KW-0479">Metal-binding</keyword>
<keyword id="KW-0482">Metalloprotease</keyword>
<keyword id="KW-0645">Protease</keyword>
<keyword id="KW-0862">Zinc</keyword>
<reference key="1">
    <citation type="submission" date="2006-08" db="EMBL/GenBank/DDBJ databases">
        <title>Complete sequence of chromosome 1 of Shewanella sp. MR-7.</title>
        <authorList>
            <person name="Copeland A."/>
            <person name="Lucas S."/>
            <person name="Lapidus A."/>
            <person name="Barry K."/>
            <person name="Detter J.C."/>
            <person name="Glavina del Rio T."/>
            <person name="Hammon N."/>
            <person name="Israni S."/>
            <person name="Dalin E."/>
            <person name="Tice H."/>
            <person name="Pitluck S."/>
            <person name="Kiss H."/>
            <person name="Brettin T."/>
            <person name="Bruce D."/>
            <person name="Han C."/>
            <person name="Tapia R."/>
            <person name="Gilna P."/>
            <person name="Schmutz J."/>
            <person name="Larimer F."/>
            <person name="Land M."/>
            <person name="Hauser L."/>
            <person name="Kyrpides N."/>
            <person name="Mikhailova N."/>
            <person name="Nealson K."/>
            <person name="Konstantinidis K."/>
            <person name="Klappenbach J."/>
            <person name="Tiedje J."/>
            <person name="Richardson P."/>
        </authorList>
    </citation>
    <scope>NUCLEOTIDE SEQUENCE [LARGE SCALE GENOMIC DNA]</scope>
    <source>
        <strain>MR-7</strain>
    </source>
</reference>
<proteinExistence type="inferred from homology"/>